<evidence type="ECO:0000250" key="1">
    <source>
        <dbReference type="UniProtKB" id="Q1EPR5"/>
    </source>
</evidence>
<evidence type="ECO:0000269" key="2">
    <source>
    </source>
</evidence>
<evidence type="ECO:0000303" key="3">
    <source>
    </source>
</evidence>
<evidence type="ECO:0000305" key="4"/>
<reference key="1">
    <citation type="journal article" date="2007" name="Appl. Environ. Microbiol.">
        <title>6-Aminohexanoate oligomer hydrolases from the alkalophilic bacteria Agromyces sp. strain KY5R and Kocuria sp. strain KY2.</title>
        <authorList>
            <person name="Yasuhira K."/>
            <person name="Tanaka Y."/>
            <person name="Shibata H."/>
            <person name="Kawashima Y."/>
            <person name="Ohara A."/>
            <person name="Kato D."/>
            <person name="Takeo M."/>
            <person name="Negoro S."/>
        </authorList>
    </citation>
    <scope>NUCLEOTIDE SEQUENCE [GENOMIC DNA]</scope>
    <scope>PROTEIN SEQUENCE OF 267-276</scope>
    <scope>FUNCTION</scope>
    <scope>CATALYTIC ACTIVITY</scope>
    <scope>BIOPHYSICOCHEMICAL PROPERTIES</scope>
    <scope>PATHWAY</scope>
    <scope>PROTEOLYTIC PROCESSING</scope>
    <source>
        <strain>KY2</strain>
    </source>
</reference>
<comment type="function">
    <text evidence="2">Involved in the degradation of nylon-6 oligomers. Degrades cyclic and linear oligomers of 6-aminohexanoate (Ahx) with a degree of polymerization greater than three by an endo-type mode. Cannot use Ahx cyclic dimer or the Ahx linear dimer.</text>
</comment>
<comment type="catalytic activity">
    <reaction evidence="2">
        <text>[N-(6-aminohexanoyl)]n + H2O = [N-(6-aminohexanoyl)]n-x + [N-(6-aminohexanoyl)]x.</text>
        <dbReference type="EC" id="3.5.1.117"/>
    </reaction>
</comment>
<comment type="biophysicochemical properties">
    <kinetics>
        <KM evidence="2">0.44 mg/ml for Ahx cyclic-oligomer</KM>
        <text evidence="2">kcat is 11.7 sec(-1) with Ahx cyclic-oligomer as substrate.</text>
    </kinetics>
    <phDependence>
        <text evidence="2">Optimum pH is 7.0-8.5.</text>
    </phDependence>
</comment>
<comment type="pathway">
    <text evidence="2">Xenobiotic degradation; nylon-6 oligomer degradation.</text>
</comment>
<comment type="subunit">
    <text evidence="1">Heterotetramer composed of 4 alpha/beta heterodimers.</text>
</comment>
<comment type="PTM">
    <text evidence="2">Expressed as an inactive precursor that is cleaved autocatalytically at Asn266/Thr267 to generate an active enzyme composed of an alpha subunit and a beta subunit.</text>
</comment>
<comment type="similarity">
    <text evidence="4">Belongs to the peptidase S58 family.</text>
</comment>
<accession>Q1EPR4</accession>
<dbReference type="EC" id="3.5.1.117" evidence="2"/>
<dbReference type="EMBL" id="AB262080">
    <property type="protein sequence ID" value="BAE95770.1"/>
    <property type="molecule type" value="Genomic_DNA"/>
</dbReference>
<dbReference type="SMR" id="Q1EPR4"/>
<dbReference type="MEROPS" id="P01.102"/>
<dbReference type="BRENDA" id="3.5.1.117">
    <property type="organism ID" value="10251"/>
</dbReference>
<dbReference type="UniPathway" id="UPA00207"/>
<dbReference type="GO" id="GO:0004177">
    <property type="term" value="F:aminopeptidase activity"/>
    <property type="evidence" value="ECO:0007669"/>
    <property type="project" value="TreeGrafter"/>
</dbReference>
<dbReference type="GO" id="GO:0019876">
    <property type="term" value="P:nylon catabolic process"/>
    <property type="evidence" value="ECO:0000314"/>
    <property type="project" value="UniProtKB"/>
</dbReference>
<dbReference type="CDD" id="cd00123">
    <property type="entry name" value="DmpA_OAT"/>
    <property type="match status" value="1"/>
</dbReference>
<dbReference type="Gene3D" id="3.60.70.12">
    <property type="entry name" value="L-amino peptidase D-ALA esterase/amidase"/>
    <property type="match status" value="1"/>
</dbReference>
<dbReference type="InterPro" id="IPR016117">
    <property type="entry name" value="ArgJ-like_dom_sf"/>
</dbReference>
<dbReference type="InterPro" id="IPR005321">
    <property type="entry name" value="Peptidase_S58_DmpA"/>
</dbReference>
<dbReference type="PANTHER" id="PTHR36512:SF3">
    <property type="entry name" value="BLR5678 PROTEIN"/>
    <property type="match status" value="1"/>
</dbReference>
<dbReference type="PANTHER" id="PTHR36512">
    <property type="entry name" value="D-AMINOPEPTIDASE"/>
    <property type="match status" value="1"/>
</dbReference>
<dbReference type="Pfam" id="PF03576">
    <property type="entry name" value="Peptidase_S58"/>
    <property type="match status" value="1"/>
</dbReference>
<dbReference type="SUPFAM" id="SSF56266">
    <property type="entry name" value="DmpA/ArgJ-like"/>
    <property type="match status" value="1"/>
</dbReference>
<proteinExistence type="evidence at protein level"/>
<gene>
    <name evidence="3" type="primary">nylC</name>
</gene>
<keyword id="KW-0903">Direct protein sequencing</keyword>
<keyword id="KW-0378">Hydrolase</keyword>
<keyword id="KW-0549">Nylon degradation</keyword>
<sequence>MNTTPVHALTDIDGGIAVDPAPRLAGPPVFGGPGNAAFDLVPVRSTGRETLRFDFPGVSVGSAHYEEGPTGATVIHIPAGARTAVDARGGAVGLSGGYDFNHAICLAGGASYGLEAGAGVSGALLERLEYRTGFAEAQLVSSAVIYDFSARSTAVYPDKALGRAALEFAVPGEFPQGRAGAGMSASAGKVDWDRTEITGQGAAFRRLGDVRILAVVVPNPVGVIMDRAGGIVRGNYDAQTGVRRHPVFDYQEAFAEQLPPVTQAGNTTISAIVTNVRMSPVELNQFAKQVHSSMHRGIQPFHTDMDGDTLFAVTTDEIDLPTTPGSSRGRLSVNATALGAIASEVMWDAVLEAAK</sequence>
<feature type="chain" id="PRO_0000452356" description="6-aminohexanoate-oligomer endohydrolase alpha subunit" evidence="4">
    <location>
        <begin position="1"/>
        <end position="266"/>
    </location>
</feature>
<feature type="chain" id="PRO_0000452357" description="6-aminohexanoate-oligomer endohydrolase beta subunit" evidence="4">
    <location>
        <begin position="267"/>
        <end position="355"/>
    </location>
</feature>
<feature type="active site" description="Nucleophile" evidence="1">
    <location>
        <position position="267"/>
    </location>
</feature>
<name>NYLC_KOCS2</name>
<organism>
    <name type="scientific">Kocuria sp. (strain KY2)</name>
    <dbReference type="NCBI Taxonomy" id="388923"/>
    <lineage>
        <taxon>Bacteria</taxon>
        <taxon>Bacillati</taxon>
        <taxon>Actinomycetota</taxon>
        <taxon>Actinomycetes</taxon>
        <taxon>Micrococcales</taxon>
        <taxon>Micrococcaceae</taxon>
        <taxon>Kocuria</taxon>
    </lineage>
</organism>
<protein>
    <recommendedName>
        <fullName evidence="4">6-aminohexanoate-oligomer endohydrolase</fullName>
        <ecNumber evidence="2">3.5.1.117</ecNumber>
    </recommendedName>
    <alternativeName>
        <fullName evidence="3">6-aminohexanoate oligomer hydrolase</fullName>
    </alternativeName>
    <alternativeName>
        <fullName evidence="3">Ahx endo-type-oligomer hydrolase</fullName>
    </alternativeName>
    <alternativeName>
        <fullName evidence="1">Nylon hydrolase</fullName>
    </alternativeName>
    <alternativeName>
        <fullName evidence="1">Nylonase</fullName>
    </alternativeName>
    <component>
        <recommendedName>
            <fullName evidence="4">6-aminohexanoate-oligomer endohydrolase alpha subunit</fullName>
        </recommendedName>
    </component>
    <component>
        <recommendedName>
            <fullName evidence="4">6-aminohexanoate-oligomer endohydrolase beta subunit</fullName>
        </recommendedName>
    </component>
</protein>